<comment type="function">
    <text evidence="1">Cleaves both 3' and 5' ssDNA extremities of branched DNA structures.</text>
</comment>
<comment type="subcellular location">
    <subcellularLocation>
        <location evidence="1">Cytoplasm</location>
    </subcellularLocation>
</comment>
<comment type="similarity">
    <text evidence="1">Belongs to the NucS endonuclease family.</text>
</comment>
<evidence type="ECO:0000255" key="1">
    <source>
        <dbReference type="HAMAP-Rule" id="MF_00722"/>
    </source>
</evidence>
<dbReference type="EC" id="3.1.-.-" evidence="1"/>
<dbReference type="EMBL" id="CP000580">
    <property type="protein sequence ID" value="ABN99629.1"/>
    <property type="molecule type" value="Genomic_DNA"/>
</dbReference>
<dbReference type="SMR" id="A3Q3A2"/>
<dbReference type="KEGG" id="mjl:Mjls_3853"/>
<dbReference type="HOGENOM" id="CLU_069350_0_0_11"/>
<dbReference type="BioCyc" id="MSP164757:G1G8C-3890-MONOMER"/>
<dbReference type="GO" id="GO:0005737">
    <property type="term" value="C:cytoplasm"/>
    <property type="evidence" value="ECO:0007669"/>
    <property type="project" value="UniProtKB-SubCell"/>
</dbReference>
<dbReference type="GO" id="GO:0003677">
    <property type="term" value="F:DNA binding"/>
    <property type="evidence" value="ECO:0007669"/>
    <property type="project" value="UniProtKB-KW"/>
</dbReference>
<dbReference type="GO" id="GO:0000014">
    <property type="term" value="F:single-stranded DNA endodeoxyribonuclease activity"/>
    <property type="evidence" value="ECO:0007669"/>
    <property type="project" value="UniProtKB-UniRule"/>
</dbReference>
<dbReference type="CDD" id="cd22341">
    <property type="entry name" value="NucS-like"/>
    <property type="match status" value="1"/>
</dbReference>
<dbReference type="Gene3D" id="2.70.180.20">
    <property type="match status" value="1"/>
</dbReference>
<dbReference type="Gene3D" id="3.40.1350.10">
    <property type="match status" value="1"/>
</dbReference>
<dbReference type="HAMAP" id="MF_00722">
    <property type="entry name" value="NucS"/>
    <property type="match status" value="1"/>
</dbReference>
<dbReference type="InterPro" id="IPR002793">
    <property type="entry name" value="Endonuclease_NucS"/>
</dbReference>
<dbReference type="InterPro" id="IPR048301">
    <property type="entry name" value="NucS_C"/>
</dbReference>
<dbReference type="InterPro" id="IPR048302">
    <property type="entry name" value="NucS_N"/>
</dbReference>
<dbReference type="InterPro" id="IPR049173">
    <property type="entry name" value="NucS_N_sf"/>
</dbReference>
<dbReference type="InterPro" id="IPR011856">
    <property type="entry name" value="tRNA_endonuc-like_dom_sf"/>
</dbReference>
<dbReference type="NCBIfam" id="NF002876">
    <property type="entry name" value="PRK03298.1"/>
    <property type="match status" value="1"/>
</dbReference>
<dbReference type="PANTHER" id="PTHR38814">
    <property type="entry name" value="ENDONUCLEASE NUCS"/>
    <property type="match status" value="1"/>
</dbReference>
<dbReference type="PANTHER" id="PTHR38814:SF1">
    <property type="entry name" value="ENDONUCLEASE NUCS"/>
    <property type="match status" value="1"/>
</dbReference>
<dbReference type="Pfam" id="PF01939">
    <property type="entry name" value="NucS_C"/>
    <property type="match status" value="1"/>
</dbReference>
<dbReference type="Pfam" id="PF21003">
    <property type="entry name" value="NucS_N"/>
    <property type="match status" value="1"/>
</dbReference>
<reference key="1">
    <citation type="submission" date="2007-02" db="EMBL/GenBank/DDBJ databases">
        <title>Complete sequence of Mycobacterium sp. JLS.</title>
        <authorList>
            <consortium name="US DOE Joint Genome Institute"/>
            <person name="Copeland A."/>
            <person name="Lucas S."/>
            <person name="Lapidus A."/>
            <person name="Barry K."/>
            <person name="Detter J.C."/>
            <person name="Glavina del Rio T."/>
            <person name="Hammon N."/>
            <person name="Israni S."/>
            <person name="Dalin E."/>
            <person name="Tice H."/>
            <person name="Pitluck S."/>
            <person name="Chain P."/>
            <person name="Malfatti S."/>
            <person name="Shin M."/>
            <person name="Vergez L."/>
            <person name="Schmutz J."/>
            <person name="Larimer F."/>
            <person name="Land M."/>
            <person name="Hauser L."/>
            <person name="Kyrpides N."/>
            <person name="Mikhailova N."/>
            <person name="Miller C.D."/>
            <person name="Anderson A.J."/>
            <person name="Sims R.C."/>
            <person name="Richardson P."/>
        </authorList>
    </citation>
    <scope>NUCLEOTIDE SEQUENCE [LARGE SCALE GENOMIC DNA]</scope>
    <source>
        <strain>JLS</strain>
    </source>
</reference>
<accession>A3Q3A2</accession>
<protein>
    <recommendedName>
        <fullName evidence="1">Endonuclease NucS</fullName>
        <ecNumber evidence="1">3.1.-.-</ecNumber>
    </recommendedName>
</protein>
<name>NUCS_MYCSJ</name>
<feature type="chain" id="PRO_1000045833" description="Endonuclease NucS">
    <location>
        <begin position="1"/>
        <end position="223"/>
    </location>
</feature>
<gene>
    <name evidence="1" type="primary">nucS</name>
    <name type="ordered locus">Mjls_3853</name>
</gene>
<sequence>MRLVIAQCTVDYVGRLTAHLPSARRLLLIKSDGSVSVHADDRAYKPLNWMSPPCRLSEESGDPHPVWVVENKTGEQLRITVEEIEHDSSHDLGVDPGLVKDGVEAHLQKLLAEHVELLGAGYTLVRREYMTAIGPVDLLCRDETGRSVAVEIKRRGEIDGVEQLTRYLELLNRDTLLAPVSGVFAAQQIKPQARTLANDRGIRCLILDYDQMRGMDSDEYRLF</sequence>
<keyword id="KW-0963">Cytoplasm</keyword>
<keyword id="KW-0238">DNA-binding</keyword>
<keyword id="KW-0255">Endonuclease</keyword>
<keyword id="KW-0378">Hydrolase</keyword>
<keyword id="KW-0540">Nuclease</keyword>
<proteinExistence type="inferred from homology"/>
<organism>
    <name type="scientific">Mycobacterium sp. (strain JLS)</name>
    <dbReference type="NCBI Taxonomy" id="164757"/>
    <lineage>
        <taxon>Bacteria</taxon>
        <taxon>Bacillati</taxon>
        <taxon>Actinomycetota</taxon>
        <taxon>Actinomycetes</taxon>
        <taxon>Mycobacteriales</taxon>
        <taxon>Mycobacteriaceae</taxon>
        <taxon>Mycobacterium</taxon>
    </lineage>
</organism>